<protein>
    <recommendedName>
        <fullName evidence="1">Ribosomal RNA small subunit methyltransferase J</fullName>
        <ecNumber evidence="1">2.1.1.242</ecNumber>
    </recommendedName>
    <alternativeName>
        <fullName evidence="1">16S rRNA m2G1516 methyltransferase</fullName>
    </alternativeName>
    <alternativeName>
        <fullName evidence="1">rRNA (guanine-N(2)-)-methyltransferase</fullName>
    </alternativeName>
</protein>
<dbReference type="EC" id="2.1.1.242" evidence="1"/>
<dbReference type="EMBL" id="CP000446">
    <property type="protein sequence ID" value="ABI40891.1"/>
    <property type="molecule type" value="Genomic_DNA"/>
</dbReference>
<dbReference type="RefSeq" id="WP_011624549.1">
    <property type="nucleotide sequence ID" value="NC_008321.1"/>
</dbReference>
<dbReference type="SMR" id="Q0HDH6"/>
<dbReference type="KEGG" id="she:Shewmr4_3828"/>
<dbReference type="HOGENOM" id="CLU_076324_0_1_6"/>
<dbReference type="GO" id="GO:0005737">
    <property type="term" value="C:cytoplasm"/>
    <property type="evidence" value="ECO:0007669"/>
    <property type="project" value="UniProtKB-SubCell"/>
</dbReference>
<dbReference type="GO" id="GO:0008990">
    <property type="term" value="F:rRNA (guanine-N2-)-methyltransferase activity"/>
    <property type="evidence" value="ECO:0007669"/>
    <property type="project" value="UniProtKB-UniRule"/>
</dbReference>
<dbReference type="CDD" id="cd02440">
    <property type="entry name" value="AdoMet_MTases"/>
    <property type="match status" value="1"/>
</dbReference>
<dbReference type="Gene3D" id="3.40.50.150">
    <property type="entry name" value="Vaccinia Virus protein VP39"/>
    <property type="match status" value="1"/>
</dbReference>
<dbReference type="Gene3D" id="3.40.1630.10">
    <property type="entry name" value="YhiQ-like domain"/>
    <property type="match status" value="1"/>
</dbReference>
<dbReference type="HAMAP" id="MF_01523">
    <property type="entry name" value="16SrRNA_methyltr_J"/>
    <property type="match status" value="1"/>
</dbReference>
<dbReference type="InterPro" id="IPR007536">
    <property type="entry name" value="16SrRNA_methylTrfase_J"/>
</dbReference>
<dbReference type="InterPro" id="IPR029063">
    <property type="entry name" value="SAM-dependent_MTases_sf"/>
</dbReference>
<dbReference type="PANTHER" id="PTHR36112">
    <property type="entry name" value="RIBOSOMAL RNA SMALL SUBUNIT METHYLTRANSFERASE J"/>
    <property type="match status" value="1"/>
</dbReference>
<dbReference type="PANTHER" id="PTHR36112:SF1">
    <property type="entry name" value="RIBOSOMAL RNA SMALL SUBUNIT METHYLTRANSFERASE J"/>
    <property type="match status" value="1"/>
</dbReference>
<dbReference type="Pfam" id="PF04445">
    <property type="entry name" value="SAM_MT"/>
    <property type="match status" value="1"/>
</dbReference>
<dbReference type="SUPFAM" id="SSF53335">
    <property type="entry name" value="S-adenosyl-L-methionine-dependent methyltransferases"/>
    <property type="match status" value="1"/>
</dbReference>
<keyword id="KW-0963">Cytoplasm</keyword>
<keyword id="KW-0489">Methyltransferase</keyword>
<keyword id="KW-0698">rRNA processing</keyword>
<keyword id="KW-0949">S-adenosyl-L-methionine</keyword>
<keyword id="KW-0808">Transferase</keyword>
<accession>Q0HDH6</accession>
<evidence type="ECO:0000255" key="1">
    <source>
        <dbReference type="HAMAP-Rule" id="MF_01523"/>
    </source>
</evidence>
<comment type="function">
    <text evidence="1">Specifically methylates the guanosine in position 1516 of 16S rRNA.</text>
</comment>
<comment type="catalytic activity">
    <reaction evidence="1">
        <text>guanosine(1516) in 16S rRNA + S-adenosyl-L-methionine = N(2)-methylguanosine(1516) in 16S rRNA + S-adenosyl-L-homocysteine + H(+)</text>
        <dbReference type="Rhea" id="RHEA:43220"/>
        <dbReference type="Rhea" id="RHEA-COMP:10412"/>
        <dbReference type="Rhea" id="RHEA-COMP:10413"/>
        <dbReference type="ChEBI" id="CHEBI:15378"/>
        <dbReference type="ChEBI" id="CHEBI:57856"/>
        <dbReference type="ChEBI" id="CHEBI:59789"/>
        <dbReference type="ChEBI" id="CHEBI:74269"/>
        <dbReference type="ChEBI" id="CHEBI:74481"/>
        <dbReference type="EC" id="2.1.1.242"/>
    </reaction>
</comment>
<comment type="subcellular location">
    <subcellularLocation>
        <location evidence="1">Cytoplasm</location>
    </subcellularLocation>
</comment>
<comment type="similarity">
    <text evidence="1">Belongs to the methyltransferase superfamily. RsmJ family.</text>
</comment>
<sequence length="261" mass="28804">MAAISTCQTVIPLPIPVFFNQQFPTLVDICARWQLVFDADAPFELRFESDTLTLHKRDEPKLDGIMVDFVTGAVAHRRKFGGGRGQSIAKAVGLKQGVTPKVVDGTAGLGRDAFVLASLGCTVTMVERHPVVAALLEDGLRRAYQDAEIGDWMRERMQLFHGSSLEALAKLEQEVDVVYLDPMYPHRDKSALVKKEMRVFQTLVGADLDADGLLAPAMALASKRVVVKRPDYAEDLAGVKPSMVIETKKNRFDVYVKSAMK</sequence>
<proteinExistence type="inferred from homology"/>
<name>RSMJ_SHESM</name>
<organism>
    <name type="scientific">Shewanella sp. (strain MR-4)</name>
    <dbReference type="NCBI Taxonomy" id="60480"/>
    <lineage>
        <taxon>Bacteria</taxon>
        <taxon>Pseudomonadati</taxon>
        <taxon>Pseudomonadota</taxon>
        <taxon>Gammaproteobacteria</taxon>
        <taxon>Alteromonadales</taxon>
        <taxon>Shewanellaceae</taxon>
        <taxon>Shewanella</taxon>
    </lineage>
</organism>
<feature type="chain" id="PRO_0000292648" description="Ribosomal RNA small subunit methyltransferase J">
    <location>
        <begin position="1"/>
        <end position="261"/>
    </location>
</feature>
<feature type="binding site" evidence="1">
    <location>
        <begin position="111"/>
        <end position="112"/>
    </location>
    <ligand>
        <name>S-adenosyl-L-methionine</name>
        <dbReference type="ChEBI" id="CHEBI:59789"/>
    </ligand>
</feature>
<feature type="binding site" evidence="1">
    <location>
        <begin position="127"/>
        <end position="128"/>
    </location>
    <ligand>
        <name>S-adenosyl-L-methionine</name>
        <dbReference type="ChEBI" id="CHEBI:59789"/>
    </ligand>
</feature>
<feature type="binding site" evidence="1">
    <location>
        <begin position="163"/>
        <end position="164"/>
    </location>
    <ligand>
        <name>S-adenosyl-L-methionine</name>
        <dbReference type="ChEBI" id="CHEBI:59789"/>
    </ligand>
</feature>
<feature type="binding site" evidence="1">
    <location>
        <position position="181"/>
    </location>
    <ligand>
        <name>S-adenosyl-L-methionine</name>
        <dbReference type="ChEBI" id="CHEBI:59789"/>
    </ligand>
</feature>
<reference key="1">
    <citation type="submission" date="2006-08" db="EMBL/GenBank/DDBJ databases">
        <title>Complete sequence of Shewanella sp. MR-4.</title>
        <authorList>
            <consortium name="US DOE Joint Genome Institute"/>
            <person name="Copeland A."/>
            <person name="Lucas S."/>
            <person name="Lapidus A."/>
            <person name="Barry K."/>
            <person name="Detter J.C."/>
            <person name="Glavina del Rio T."/>
            <person name="Hammon N."/>
            <person name="Israni S."/>
            <person name="Dalin E."/>
            <person name="Tice H."/>
            <person name="Pitluck S."/>
            <person name="Kiss H."/>
            <person name="Brettin T."/>
            <person name="Bruce D."/>
            <person name="Han C."/>
            <person name="Tapia R."/>
            <person name="Gilna P."/>
            <person name="Schmutz J."/>
            <person name="Larimer F."/>
            <person name="Land M."/>
            <person name="Hauser L."/>
            <person name="Kyrpides N."/>
            <person name="Mikhailova N."/>
            <person name="Nealson K."/>
            <person name="Konstantinidis K."/>
            <person name="Klappenbach J."/>
            <person name="Tiedje J."/>
            <person name="Richardson P."/>
        </authorList>
    </citation>
    <scope>NUCLEOTIDE SEQUENCE [LARGE SCALE GENOMIC DNA]</scope>
    <source>
        <strain>MR-4</strain>
    </source>
</reference>
<gene>
    <name evidence="1" type="primary">rsmJ</name>
    <name type="ordered locus">Shewmr4_3828</name>
</gene>